<feature type="chain" id="PRO_0000371888" description="NADH-quinone oxidoreductase subunit D">
    <location>
        <begin position="1"/>
        <end position="417"/>
    </location>
</feature>
<gene>
    <name evidence="1" type="primary">nuoD</name>
    <name type="ordered locus">lpg2786</name>
</gene>
<keyword id="KW-0997">Cell inner membrane</keyword>
<keyword id="KW-1003">Cell membrane</keyword>
<keyword id="KW-0472">Membrane</keyword>
<keyword id="KW-0520">NAD</keyword>
<keyword id="KW-0874">Quinone</keyword>
<keyword id="KW-1185">Reference proteome</keyword>
<keyword id="KW-1278">Translocase</keyword>
<keyword id="KW-0813">Transport</keyword>
<keyword id="KW-0830">Ubiquinone</keyword>
<accession>Q5ZRU1</accession>
<sequence length="417" mass="48177">MIELKNYTLNFGPQHPAAHGVLRLVLELEGETIVRADPHIGLLHRATEKLAETKPYIQSIGYMDRLDYVSMMCNEHAYVMAIEKLLGIEPPLRAKYIRTMFDEVTRILNHLLWLGATALDIGAMTVFLYCFREREDLFDCYEAVSGARMHATYYRPGGVARDLPDTMPQYKPSRWHSEREIEKKNHNRQGSLLDFLWDFTERFPHCVDEYETLLTDNRIWKQRTVDIGVVSPENALQWGFTGPMLRGSGIAWDLRKKQSYAAYDRVEFDIPVGKTGDCYDRYLVRVEELRQSNRIIRQCIEWLRKHPGPVKVDDYKVSPPRRVVMKHDMEALIHHFKLFTEGFCLPRGEVYSSVEAPKGEFGIYMVSDGANKPYRLKIRAPGFAHLSSFDDMVRGHMLADGVAILASQDIVFGEIDR</sequence>
<reference key="1">
    <citation type="journal article" date="2004" name="Science">
        <title>The genomic sequence of the accidental pathogen Legionella pneumophila.</title>
        <authorList>
            <person name="Chien M."/>
            <person name="Morozova I."/>
            <person name="Shi S."/>
            <person name="Sheng H."/>
            <person name="Chen J."/>
            <person name="Gomez S.M."/>
            <person name="Asamani G."/>
            <person name="Hill K."/>
            <person name="Nuara J."/>
            <person name="Feder M."/>
            <person name="Rineer J."/>
            <person name="Greenberg J.J."/>
            <person name="Steshenko V."/>
            <person name="Park S.H."/>
            <person name="Zhao B."/>
            <person name="Teplitskaya E."/>
            <person name="Edwards J.R."/>
            <person name="Pampou S."/>
            <person name="Georghiou A."/>
            <person name="Chou I.-C."/>
            <person name="Iannuccilli W."/>
            <person name="Ulz M.E."/>
            <person name="Kim D.H."/>
            <person name="Geringer-Sameth A."/>
            <person name="Goldsberry C."/>
            <person name="Morozov P."/>
            <person name="Fischer S.G."/>
            <person name="Segal G."/>
            <person name="Qu X."/>
            <person name="Rzhetsky A."/>
            <person name="Zhang P."/>
            <person name="Cayanis E."/>
            <person name="De Jong P.J."/>
            <person name="Ju J."/>
            <person name="Kalachikov S."/>
            <person name="Shuman H.A."/>
            <person name="Russo J.J."/>
        </authorList>
    </citation>
    <scope>NUCLEOTIDE SEQUENCE [LARGE SCALE GENOMIC DNA]</scope>
    <source>
        <strain>Philadelphia 1 / ATCC 33152 / DSM 7513</strain>
    </source>
</reference>
<comment type="function">
    <text evidence="1">NDH-1 shuttles electrons from NADH, via FMN and iron-sulfur (Fe-S) centers, to quinones in the respiratory chain. The immediate electron acceptor for the enzyme in this species is believed to be ubiquinone. Couples the redox reaction to proton translocation (for every two electrons transferred, four hydrogen ions are translocated across the cytoplasmic membrane), and thus conserves the redox energy in a proton gradient.</text>
</comment>
<comment type="catalytic activity">
    <reaction evidence="1">
        <text>a quinone + NADH + 5 H(+)(in) = a quinol + NAD(+) + 4 H(+)(out)</text>
        <dbReference type="Rhea" id="RHEA:57888"/>
        <dbReference type="ChEBI" id="CHEBI:15378"/>
        <dbReference type="ChEBI" id="CHEBI:24646"/>
        <dbReference type="ChEBI" id="CHEBI:57540"/>
        <dbReference type="ChEBI" id="CHEBI:57945"/>
        <dbReference type="ChEBI" id="CHEBI:132124"/>
    </reaction>
</comment>
<comment type="subunit">
    <text evidence="1">NDH-1 is composed of 14 different subunits. Subunits NuoB, C, D, E, F, and G constitute the peripheral sector of the complex.</text>
</comment>
<comment type="subcellular location">
    <subcellularLocation>
        <location evidence="1">Cell inner membrane</location>
        <topology evidence="1">Peripheral membrane protein</topology>
        <orientation evidence="1">Cytoplasmic side</orientation>
    </subcellularLocation>
</comment>
<comment type="similarity">
    <text evidence="1">Belongs to the complex I 49 kDa subunit family.</text>
</comment>
<comment type="sequence caution" evidence="2">
    <conflict type="erroneous initiation">
        <sequence resource="EMBL-CDS" id="AAU28836"/>
    </conflict>
</comment>
<proteinExistence type="inferred from homology"/>
<dbReference type="EC" id="7.1.1.-" evidence="1"/>
<dbReference type="EMBL" id="AE017354">
    <property type="protein sequence ID" value="AAU28836.1"/>
    <property type="status" value="ALT_INIT"/>
    <property type="molecule type" value="Genomic_DNA"/>
</dbReference>
<dbReference type="RefSeq" id="YP_096783.1">
    <property type="nucleotide sequence ID" value="NC_002942.5"/>
</dbReference>
<dbReference type="SMR" id="Q5ZRU1"/>
<dbReference type="STRING" id="272624.lpg2786"/>
<dbReference type="PaxDb" id="272624-lpg2786"/>
<dbReference type="KEGG" id="lpn:lpg2786"/>
<dbReference type="PATRIC" id="fig|272624.6.peg.2967"/>
<dbReference type="eggNOG" id="COG0649">
    <property type="taxonomic scope" value="Bacteria"/>
</dbReference>
<dbReference type="HOGENOM" id="CLU_015134_1_1_6"/>
<dbReference type="OrthoDB" id="9801496at2"/>
<dbReference type="Proteomes" id="UP000000609">
    <property type="component" value="Chromosome"/>
</dbReference>
<dbReference type="GO" id="GO:0005886">
    <property type="term" value="C:plasma membrane"/>
    <property type="evidence" value="ECO:0007669"/>
    <property type="project" value="UniProtKB-SubCell"/>
</dbReference>
<dbReference type="GO" id="GO:0051287">
    <property type="term" value="F:NAD binding"/>
    <property type="evidence" value="ECO:0007669"/>
    <property type="project" value="InterPro"/>
</dbReference>
<dbReference type="GO" id="GO:0050136">
    <property type="term" value="F:NADH:ubiquinone reductase (non-electrogenic) activity"/>
    <property type="evidence" value="ECO:0007669"/>
    <property type="project" value="UniProtKB-UniRule"/>
</dbReference>
<dbReference type="GO" id="GO:0048038">
    <property type="term" value="F:quinone binding"/>
    <property type="evidence" value="ECO:0007669"/>
    <property type="project" value="UniProtKB-KW"/>
</dbReference>
<dbReference type="FunFam" id="1.10.645.10:FF:000005">
    <property type="entry name" value="NADH-quinone oxidoreductase subunit D"/>
    <property type="match status" value="1"/>
</dbReference>
<dbReference type="Gene3D" id="1.10.645.10">
    <property type="entry name" value="Cytochrome-c3 Hydrogenase, chain B"/>
    <property type="match status" value="1"/>
</dbReference>
<dbReference type="HAMAP" id="MF_01358">
    <property type="entry name" value="NDH1_NuoD"/>
    <property type="match status" value="1"/>
</dbReference>
<dbReference type="InterPro" id="IPR001135">
    <property type="entry name" value="NADH_Q_OxRdtase_suD"/>
</dbReference>
<dbReference type="InterPro" id="IPR014029">
    <property type="entry name" value="NADH_UbQ_OxRdtase_49kDa_CS"/>
</dbReference>
<dbReference type="InterPro" id="IPR022885">
    <property type="entry name" value="NDH1_su_D/H"/>
</dbReference>
<dbReference type="InterPro" id="IPR029014">
    <property type="entry name" value="NiFe-Hase_large"/>
</dbReference>
<dbReference type="NCBIfam" id="TIGR01962">
    <property type="entry name" value="NuoD"/>
    <property type="match status" value="1"/>
</dbReference>
<dbReference type="NCBIfam" id="NF004739">
    <property type="entry name" value="PRK06075.1"/>
    <property type="match status" value="1"/>
</dbReference>
<dbReference type="PANTHER" id="PTHR11993:SF10">
    <property type="entry name" value="NADH DEHYDROGENASE [UBIQUINONE] IRON-SULFUR PROTEIN 2, MITOCHONDRIAL"/>
    <property type="match status" value="1"/>
</dbReference>
<dbReference type="PANTHER" id="PTHR11993">
    <property type="entry name" value="NADH-UBIQUINONE OXIDOREDUCTASE 49 KDA SUBUNIT"/>
    <property type="match status" value="1"/>
</dbReference>
<dbReference type="Pfam" id="PF00346">
    <property type="entry name" value="Complex1_49kDa"/>
    <property type="match status" value="1"/>
</dbReference>
<dbReference type="SUPFAM" id="SSF56762">
    <property type="entry name" value="HydB/Nqo4-like"/>
    <property type="match status" value="1"/>
</dbReference>
<dbReference type="PROSITE" id="PS00535">
    <property type="entry name" value="COMPLEX1_49K"/>
    <property type="match status" value="1"/>
</dbReference>
<name>NUOD_LEGPH</name>
<protein>
    <recommendedName>
        <fullName evidence="1">NADH-quinone oxidoreductase subunit D</fullName>
        <ecNumber evidence="1">7.1.1.-</ecNumber>
    </recommendedName>
    <alternativeName>
        <fullName evidence="1">NADH dehydrogenase I subunit D</fullName>
    </alternativeName>
    <alternativeName>
        <fullName evidence="1">NDH-1 subunit D</fullName>
    </alternativeName>
</protein>
<organism>
    <name type="scientific">Legionella pneumophila subsp. pneumophila (strain Philadelphia 1 / ATCC 33152 / DSM 7513)</name>
    <dbReference type="NCBI Taxonomy" id="272624"/>
    <lineage>
        <taxon>Bacteria</taxon>
        <taxon>Pseudomonadati</taxon>
        <taxon>Pseudomonadota</taxon>
        <taxon>Gammaproteobacteria</taxon>
        <taxon>Legionellales</taxon>
        <taxon>Legionellaceae</taxon>
        <taxon>Legionella</taxon>
    </lineage>
</organism>
<evidence type="ECO:0000255" key="1">
    <source>
        <dbReference type="HAMAP-Rule" id="MF_01358"/>
    </source>
</evidence>
<evidence type="ECO:0000305" key="2"/>